<organism>
    <name type="scientific">Salmonella typhimurium (strain LT2 / SGSC1412 / ATCC 700720)</name>
    <dbReference type="NCBI Taxonomy" id="99287"/>
    <lineage>
        <taxon>Bacteria</taxon>
        <taxon>Pseudomonadati</taxon>
        <taxon>Pseudomonadota</taxon>
        <taxon>Gammaproteobacteria</taxon>
        <taxon>Enterobacterales</taxon>
        <taxon>Enterobacteriaceae</taxon>
        <taxon>Salmonella</taxon>
    </lineage>
</organism>
<keyword id="KW-0298">Galactitol metabolism</keyword>
<keyword id="KW-1185">Reference proteome</keyword>
<protein>
    <recommendedName>
        <fullName evidence="1">D-tagatose-1,6-bisphosphate aldolase subunit GatZ</fullName>
    </recommendedName>
</protein>
<name>GATZ_SALTY</name>
<sequence>MKEIIARHKAGEHLGICSVCSAHPLVIESALLFDLNTDNKVLIEATSNQVNQFGGYTGMKPADFRDFVYGIAQEVGFPRERLILGGDHLGPNCWQNEPAAAAMEKSVELIKAYVAAGFSKIHLDASMSCADDPTPLDPMVVARRAAVLCKAAEGTANEEQKCHLTYVIGTEVPVPGGEASTIGSVHVTREVDAARTLETHQIAFRESGLEEALSRVIAIVVQPGVEFDHTQIIHYQPQAAQALSAWIKETPMVYEAHSTDYQTRQAYRALVRDHYAILKVGPALTFALREAIFALAQMENELISPEQRSRVLEVIDEVMLNEPGYWKKYYRPTWSQAMVDIHFSLSDRIRYYWPHPRIRQSVEKLIANLNNVTLPLGLISQFMPVQFERLSEGVLTPTPHNLIIDKIQDVLRAYRFGCTPDVA</sequence>
<feature type="chain" id="PRO_0000372518" description="D-tagatose-1,6-bisphosphate aldolase subunit GatZ">
    <location>
        <begin position="1"/>
        <end position="423"/>
    </location>
</feature>
<reference key="1">
    <citation type="journal article" date="2001" name="Nature">
        <title>Complete genome sequence of Salmonella enterica serovar Typhimurium LT2.</title>
        <authorList>
            <person name="McClelland M."/>
            <person name="Sanderson K.E."/>
            <person name="Spieth J."/>
            <person name="Clifton S.W."/>
            <person name="Latreille P."/>
            <person name="Courtney L."/>
            <person name="Porwollik S."/>
            <person name="Ali J."/>
            <person name="Dante M."/>
            <person name="Du F."/>
            <person name="Hou S."/>
            <person name="Layman D."/>
            <person name="Leonard S."/>
            <person name="Nguyen C."/>
            <person name="Scott K."/>
            <person name="Holmes A."/>
            <person name="Grewal N."/>
            <person name="Mulvaney E."/>
            <person name="Ryan E."/>
            <person name="Sun H."/>
            <person name="Florea L."/>
            <person name="Miller W."/>
            <person name="Stoneking T."/>
            <person name="Nhan M."/>
            <person name="Waterston R."/>
            <person name="Wilson R.K."/>
        </authorList>
    </citation>
    <scope>NUCLEOTIDE SEQUENCE [LARGE SCALE GENOMIC DNA]</scope>
    <source>
        <strain>LT2 / SGSC1412 / ATCC 700720</strain>
    </source>
</reference>
<comment type="function">
    <text evidence="1">Component of the tagatose-1,6-bisphosphate aldolase GatYZ that is required for full activity and stability of the Y subunit. Could have a chaperone-like function for the proper and stable folding of GatY. When expressed alone, GatZ does not show any aldolase activity. Is involved in the catabolism of galactitol.</text>
</comment>
<comment type="pathway">
    <text evidence="1">Carbohydrate metabolism; D-tagatose 6-phosphate degradation; D-glyceraldehyde 3-phosphate and glycerone phosphate from D-tagatose 6-phosphate: step 2/2.</text>
</comment>
<comment type="subunit">
    <text evidence="1">Forms a complex with GatY.</text>
</comment>
<comment type="similarity">
    <text evidence="1">Belongs to the GatZ/KbaZ family. GatZ subfamily.</text>
</comment>
<proteinExistence type="inferred from homology"/>
<dbReference type="EMBL" id="AE006468">
    <property type="protein sequence ID" value="AAL22129.1"/>
    <property type="molecule type" value="Genomic_DNA"/>
</dbReference>
<dbReference type="RefSeq" id="NP_462170.1">
    <property type="nucleotide sequence ID" value="NC_003197.2"/>
</dbReference>
<dbReference type="RefSeq" id="WP_000658628.1">
    <property type="nucleotide sequence ID" value="NC_003197.2"/>
</dbReference>
<dbReference type="SMR" id="Q8ZLV1"/>
<dbReference type="STRING" id="99287.STM3257"/>
<dbReference type="PaxDb" id="99287-STM3257"/>
<dbReference type="GeneID" id="1254780"/>
<dbReference type="KEGG" id="stm:STM3257"/>
<dbReference type="PATRIC" id="fig|99287.12.peg.3456"/>
<dbReference type="HOGENOM" id="CLU_053334_0_0_6"/>
<dbReference type="PhylomeDB" id="Q8ZLV1"/>
<dbReference type="BioCyc" id="SENT99287:STM3257-MONOMER"/>
<dbReference type="UniPathway" id="UPA00704">
    <property type="reaction ID" value="UER00716"/>
</dbReference>
<dbReference type="Proteomes" id="UP000001014">
    <property type="component" value="Chromosome"/>
</dbReference>
<dbReference type="GO" id="GO:0005886">
    <property type="term" value="C:plasma membrane"/>
    <property type="evidence" value="ECO:0000318"/>
    <property type="project" value="GO_Central"/>
</dbReference>
<dbReference type="GO" id="GO:2001059">
    <property type="term" value="P:D-tagatose 6-phosphate catabolic process"/>
    <property type="evidence" value="ECO:0007669"/>
    <property type="project" value="UniProtKB-UniRule"/>
</dbReference>
<dbReference type="GO" id="GO:0019402">
    <property type="term" value="P:galactitol metabolic process"/>
    <property type="evidence" value="ECO:0007669"/>
    <property type="project" value="UniProtKB-KW"/>
</dbReference>
<dbReference type="GO" id="GO:0009401">
    <property type="term" value="P:phosphoenolpyruvate-dependent sugar phosphotransferase system"/>
    <property type="evidence" value="ECO:0000318"/>
    <property type="project" value="GO_Central"/>
</dbReference>
<dbReference type="FunFam" id="1.10.400.20:FF:000001">
    <property type="entry name" value="D-tagatose-1,6-bisphosphate aldolase subunit GatZ"/>
    <property type="match status" value="1"/>
</dbReference>
<dbReference type="FunFam" id="3.20.20.70:FF:000141">
    <property type="entry name" value="D-tagatose-1,6-bisphosphate aldolase subunit GatZ"/>
    <property type="match status" value="1"/>
</dbReference>
<dbReference type="Gene3D" id="3.20.20.70">
    <property type="entry name" value="Aldolase class I"/>
    <property type="match status" value="1"/>
</dbReference>
<dbReference type="Gene3D" id="1.10.400.20">
    <property type="entry name" value="putative tagatose 6-phosphate kinase domain like"/>
    <property type="match status" value="1"/>
</dbReference>
<dbReference type="HAMAP" id="MF_01296">
    <property type="entry name" value="Tagatose_aldol_GatZ"/>
    <property type="match status" value="1"/>
</dbReference>
<dbReference type="InterPro" id="IPR013785">
    <property type="entry name" value="Aldolase_TIM"/>
</dbReference>
<dbReference type="InterPro" id="IPR012062">
    <property type="entry name" value="GatZ/KbaZ-like"/>
</dbReference>
<dbReference type="InterPro" id="IPR050303">
    <property type="entry name" value="GatZ_KbaZ_carbometab"/>
</dbReference>
<dbReference type="InterPro" id="IPR023436">
    <property type="entry name" value="TagBP_ald_GatZ"/>
</dbReference>
<dbReference type="NCBIfam" id="TIGR02810">
    <property type="entry name" value="agaZ_gatZ"/>
    <property type="match status" value="1"/>
</dbReference>
<dbReference type="NCBIfam" id="NF011626">
    <property type="entry name" value="PRK15052.1"/>
    <property type="match status" value="1"/>
</dbReference>
<dbReference type="PANTHER" id="PTHR32502:SF12">
    <property type="entry name" value="D-TAGATOSE-1,6-BISPHOSPHATE ALDOLASE SUBUNIT GATZ"/>
    <property type="match status" value="1"/>
</dbReference>
<dbReference type="PANTHER" id="PTHR32502">
    <property type="entry name" value="N-ACETYLGALACTOSAMINE PERMEASE II COMPONENT-RELATED"/>
    <property type="match status" value="1"/>
</dbReference>
<dbReference type="Pfam" id="PF08013">
    <property type="entry name" value="GatZ_KbaZ-like"/>
    <property type="match status" value="1"/>
</dbReference>
<dbReference type="PIRSF" id="PIRSF009264">
    <property type="entry name" value="TagBP_ald_AgaZ"/>
    <property type="match status" value="1"/>
</dbReference>
<dbReference type="SUPFAM" id="SSF51569">
    <property type="entry name" value="Aldolase"/>
    <property type="match status" value="1"/>
</dbReference>
<gene>
    <name evidence="1" type="primary">gatZ</name>
    <name type="ordered locus">STM3257</name>
</gene>
<accession>Q8ZLV1</accession>
<evidence type="ECO:0000255" key="1">
    <source>
        <dbReference type="HAMAP-Rule" id="MF_01296"/>
    </source>
</evidence>